<gene>
    <name type="primary">phaF</name>
    <name type="synonym">phaF1</name>
    <name type="ordered locus">R02914</name>
    <name type="ORF">SMc03183</name>
</gene>
<dbReference type="EMBL" id="X93358">
    <property type="protein sequence ID" value="CAA63739.1"/>
    <property type="molecule type" value="Genomic_DNA"/>
</dbReference>
<dbReference type="EMBL" id="AL591688">
    <property type="protein sequence ID" value="CAC47493.1"/>
    <property type="status" value="ALT_INIT"/>
    <property type="molecule type" value="Genomic_DNA"/>
</dbReference>
<dbReference type="RefSeq" id="NP_387020.1">
    <property type="nucleotide sequence ID" value="NC_003047.1"/>
</dbReference>
<dbReference type="SMR" id="Q52983"/>
<dbReference type="TCDB" id="2.A.63.1.1">
    <property type="family name" value="the monovalent cation (k(+) or na(+)):proton antiporter-3 (cpa3) family"/>
</dbReference>
<dbReference type="EnsemblBacteria" id="CAC47493">
    <property type="protein sequence ID" value="CAC47493"/>
    <property type="gene ID" value="SMc03183"/>
</dbReference>
<dbReference type="KEGG" id="sme:SMc03183"/>
<dbReference type="PATRIC" id="fig|266834.11.peg.4435"/>
<dbReference type="eggNOG" id="COG2212">
    <property type="taxonomic scope" value="Bacteria"/>
</dbReference>
<dbReference type="HOGENOM" id="CLU_125825_1_3_5"/>
<dbReference type="OrthoDB" id="9800226at2"/>
<dbReference type="Proteomes" id="UP000001976">
    <property type="component" value="Chromosome"/>
</dbReference>
<dbReference type="GO" id="GO:0005886">
    <property type="term" value="C:plasma membrane"/>
    <property type="evidence" value="ECO:0007669"/>
    <property type="project" value="UniProtKB-SubCell"/>
</dbReference>
<dbReference type="GO" id="GO:0015385">
    <property type="term" value="F:sodium:proton antiporter activity"/>
    <property type="evidence" value="ECO:0007669"/>
    <property type="project" value="TreeGrafter"/>
</dbReference>
<dbReference type="GO" id="GO:0006813">
    <property type="term" value="P:potassium ion transport"/>
    <property type="evidence" value="ECO:0007669"/>
    <property type="project" value="UniProtKB-KW"/>
</dbReference>
<dbReference type="InterPro" id="IPR007208">
    <property type="entry name" value="MrpF/PhaF-like"/>
</dbReference>
<dbReference type="NCBIfam" id="NF004812">
    <property type="entry name" value="PRK06161.1"/>
    <property type="match status" value="1"/>
</dbReference>
<dbReference type="PANTHER" id="PTHR34702">
    <property type="entry name" value="NA(+)/H(+) ANTIPORTER SUBUNIT F1"/>
    <property type="match status" value="1"/>
</dbReference>
<dbReference type="PANTHER" id="PTHR34702:SF1">
    <property type="entry name" value="NA(+)_H(+) ANTIPORTER SUBUNIT F"/>
    <property type="match status" value="1"/>
</dbReference>
<dbReference type="Pfam" id="PF04066">
    <property type="entry name" value="MrpF_PhaF"/>
    <property type="match status" value="1"/>
</dbReference>
<dbReference type="PIRSF" id="PIRSF028784">
    <property type="entry name" value="MrpF"/>
    <property type="match status" value="1"/>
</dbReference>
<accession>Q52983</accession>
<reference key="1">
    <citation type="journal article" date="1998" name="Mol. Microbiol.">
        <title>The pha gene cluster of Rhizobium meliloti involved in pH adaptation and symbiosis encodes a novel type of K+ efflux system.</title>
        <authorList>
            <person name="Putnoky P."/>
            <person name="Kereszt A."/>
            <person name="Nakamura T."/>
            <person name="Endre G."/>
            <person name="Grosskopf E."/>
            <person name="Kiss P."/>
            <person name="Kondorosi A."/>
        </authorList>
    </citation>
    <scope>NUCLEOTIDE SEQUENCE [GENOMIC DNA]</scope>
    <source>
        <strain>41</strain>
    </source>
</reference>
<reference key="2">
    <citation type="journal article" date="2001" name="Proc. Natl. Acad. Sci. U.S.A.">
        <title>Analysis of the chromosome sequence of the legume symbiont Sinorhizobium meliloti strain 1021.</title>
        <authorList>
            <person name="Capela D."/>
            <person name="Barloy-Hubler F."/>
            <person name="Gouzy J."/>
            <person name="Bothe G."/>
            <person name="Ampe F."/>
            <person name="Batut J."/>
            <person name="Boistard P."/>
            <person name="Becker A."/>
            <person name="Boutry M."/>
            <person name="Cadieu E."/>
            <person name="Dreano S."/>
            <person name="Gloux S."/>
            <person name="Godrie T."/>
            <person name="Goffeau A."/>
            <person name="Kahn D."/>
            <person name="Kiss E."/>
            <person name="Lelaure V."/>
            <person name="Masuy D."/>
            <person name="Pohl T."/>
            <person name="Portetelle D."/>
            <person name="Puehler A."/>
            <person name="Purnelle B."/>
            <person name="Ramsperger U."/>
            <person name="Renard C."/>
            <person name="Thebault P."/>
            <person name="Vandenbol M."/>
            <person name="Weidner S."/>
            <person name="Galibert F."/>
        </authorList>
    </citation>
    <scope>NUCLEOTIDE SEQUENCE [LARGE SCALE GENOMIC DNA]</scope>
    <source>
        <strain>1021</strain>
    </source>
</reference>
<reference key="3">
    <citation type="journal article" date="2001" name="Science">
        <title>The composite genome of the legume symbiont Sinorhizobium meliloti.</title>
        <authorList>
            <person name="Galibert F."/>
            <person name="Finan T.M."/>
            <person name="Long S.R."/>
            <person name="Puehler A."/>
            <person name="Abola P."/>
            <person name="Ampe F."/>
            <person name="Barloy-Hubler F."/>
            <person name="Barnett M.J."/>
            <person name="Becker A."/>
            <person name="Boistard P."/>
            <person name="Bothe G."/>
            <person name="Boutry M."/>
            <person name="Bowser L."/>
            <person name="Buhrmester J."/>
            <person name="Cadieu E."/>
            <person name="Capela D."/>
            <person name="Chain P."/>
            <person name="Cowie A."/>
            <person name="Davis R.W."/>
            <person name="Dreano S."/>
            <person name="Federspiel N.A."/>
            <person name="Fisher R.F."/>
            <person name="Gloux S."/>
            <person name="Godrie T."/>
            <person name="Goffeau A."/>
            <person name="Golding B."/>
            <person name="Gouzy J."/>
            <person name="Gurjal M."/>
            <person name="Hernandez-Lucas I."/>
            <person name="Hong A."/>
            <person name="Huizar L."/>
            <person name="Hyman R.W."/>
            <person name="Jones T."/>
            <person name="Kahn D."/>
            <person name="Kahn M.L."/>
            <person name="Kalman S."/>
            <person name="Keating D.H."/>
            <person name="Kiss E."/>
            <person name="Komp C."/>
            <person name="Lelaure V."/>
            <person name="Masuy D."/>
            <person name="Palm C."/>
            <person name="Peck M.C."/>
            <person name="Pohl T.M."/>
            <person name="Portetelle D."/>
            <person name="Purnelle B."/>
            <person name="Ramsperger U."/>
            <person name="Surzycki R."/>
            <person name="Thebault P."/>
            <person name="Vandenbol M."/>
            <person name="Vorhoelter F.J."/>
            <person name="Weidner S."/>
            <person name="Wells D.H."/>
            <person name="Wong K."/>
            <person name="Yeh K.-C."/>
            <person name="Batut J."/>
        </authorList>
    </citation>
    <scope>NUCLEOTIDE SEQUENCE [LARGE SCALE GENOMIC DNA]</scope>
    <source>
        <strain>1021</strain>
    </source>
</reference>
<sequence>MELAVVWSVLVAQTMLALAMAFALYRMARGPRAQDRILGLDTLYINAMLMLITFGIRTANTVYFETALIIAVIGFASSIALAKFLMRGEVIE</sequence>
<protein>
    <recommendedName>
        <fullName>Probable K(+)/H(+) antiporter subunit F</fullName>
    </recommendedName>
    <alternativeName>
        <fullName>pH adaptation potassium efflux system protein F</fullName>
        <shortName>Pha system subunit F</shortName>
    </alternativeName>
</protein>
<organism>
    <name type="scientific">Rhizobium meliloti (strain 1021)</name>
    <name type="common">Ensifer meliloti</name>
    <name type="synonym">Sinorhizobium meliloti</name>
    <dbReference type="NCBI Taxonomy" id="266834"/>
    <lineage>
        <taxon>Bacteria</taxon>
        <taxon>Pseudomonadati</taxon>
        <taxon>Pseudomonadota</taxon>
        <taxon>Alphaproteobacteria</taxon>
        <taxon>Hyphomicrobiales</taxon>
        <taxon>Rhizobiaceae</taxon>
        <taxon>Sinorhizobium/Ensifer group</taxon>
        <taxon>Sinorhizobium</taxon>
    </lineage>
</organism>
<keyword id="KW-0050">Antiport</keyword>
<keyword id="KW-1003">Cell membrane</keyword>
<keyword id="KW-0375">Hydrogen ion transport</keyword>
<keyword id="KW-0406">Ion transport</keyword>
<keyword id="KW-0472">Membrane</keyword>
<keyword id="KW-0630">Potassium</keyword>
<keyword id="KW-0633">Potassium transport</keyword>
<keyword id="KW-1185">Reference proteome</keyword>
<keyword id="KW-0812">Transmembrane</keyword>
<keyword id="KW-1133">Transmembrane helix</keyword>
<keyword id="KW-0813">Transport</keyword>
<proteinExistence type="inferred from homology"/>
<name>PHAF_RHIME</name>
<evidence type="ECO:0000255" key="1"/>
<evidence type="ECO:0000305" key="2"/>
<feature type="chain" id="PRO_0000087744" description="Probable K(+)/H(+) antiporter subunit F">
    <location>
        <begin position="1"/>
        <end position="92"/>
    </location>
</feature>
<feature type="transmembrane region" description="Helical" evidence="1">
    <location>
        <begin position="4"/>
        <end position="24"/>
    </location>
</feature>
<feature type="transmembrane region" description="Helical" evidence="1">
    <location>
        <begin position="36"/>
        <end position="56"/>
    </location>
</feature>
<feature type="transmembrane region" description="Helical" evidence="1">
    <location>
        <begin position="62"/>
        <end position="82"/>
    </location>
</feature>
<comment type="function">
    <text>Part of a K(+) efflux system which is required for the adaptation of R.meliloti to alkaline pH as well as for the infection process during symbiotic nodule development.</text>
</comment>
<comment type="subunit">
    <text>May form a hetero-oligomeric complex that consists of six subunits: PhaAB, PhaC, PhaD, PhaE, PhaF and PhaG.</text>
</comment>
<comment type="subcellular location">
    <subcellularLocation>
        <location evidence="2">Cell membrane</location>
        <topology evidence="2">Multi-pass membrane protein</topology>
    </subcellularLocation>
</comment>
<comment type="similarity">
    <text evidence="2">Belongs to the CPA3 antiporters (TC 2.A.63) subunit F family.</text>
</comment>
<comment type="sequence caution" evidence="2">
    <conflict type="erroneous initiation">
        <sequence resource="EMBL-CDS" id="CAC47493"/>
    </conflict>
</comment>